<keyword id="KW-0217">Developmental protein</keyword>
<keyword id="KW-1015">Disulfide bond</keyword>
<keyword id="KW-0272">Extracellular matrix</keyword>
<keyword id="KW-0325">Glycoprotein</keyword>
<keyword id="KW-0449">Lipoprotein</keyword>
<keyword id="KW-1185">Reference proteome</keyword>
<keyword id="KW-0964">Secreted</keyword>
<keyword id="KW-0732">Signal</keyword>
<keyword id="KW-0879">Wnt signaling pathway</keyword>
<proteinExistence type="inferred from homology"/>
<reference key="1">
    <citation type="submission" date="2006-01" db="EMBL/GenBank/DDBJ databases">
        <title>NISC comparative sequencing initiative.</title>
        <authorList>
            <person name="Antonellis A."/>
            <person name="Ayele K."/>
            <person name="Benjamin B."/>
            <person name="Blakesley R.W."/>
            <person name="Boakye A."/>
            <person name="Bouffard G.G."/>
            <person name="Brinkley C."/>
            <person name="Brooks S."/>
            <person name="Chu G."/>
            <person name="Coleman H."/>
            <person name="Engle J."/>
            <person name="Gestole M."/>
            <person name="Greene A."/>
            <person name="Guan X."/>
            <person name="Gupta J."/>
            <person name="Haghighi P."/>
            <person name="Han J."/>
            <person name="Hansen N."/>
            <person name="Ho S.-L."/>
            <person name="Hu P."/>
            <person name="Hunter G."/>
            <person name="Hurle B."/>
            <person name="Idol J.R."/>
            <person name="Kwong P."/>
            <person name="Laric P."/>
            <person name="Larson S."/>
            <person name="Lee-Lin S.-Q."/>
            <person name="Legaspi R."/>
            <person name="Madden M."/>
            <person name="Maduro Q.L."/>
            <person name="Maduro V.B."/>
            <person name="Margulies E.H."/>
            <person name="Masiello C."/>
            <person name="Maskeri B."/>
            <person name="McDowell J."/>
            <person name="Mojidi H.A."/>
            <person name="Mullikin J.C."/>
            <person name="Oestreicher J.S."/>
            <person name="Park M."/>
            <person name="Portnoy M.E."/>
            <person name="Prasad A."/>
            <person name="Puri O."/>
            <person name="Reddix-Dugue N."/>
            <person name="Schandler K."/>
            <person name="Schueler M.G."/>
            <person name="Sison C."/>
            <person name="Stantripop S."/>
            <person name="Stephen E."/>
            <person name="Taye A."/>
            <person name="Thomas J.W."/>
            <person name="Thomas P.J."/>
            <person name="Tsipouri V."/>
            <person name="Ung L."/>
            <person name="Vogt J.L."/>
            <person name="Wetherby K.D."/>
            <person name="Young A."/>
            <person name="Green E.D."/>
        </authorList>
    </citation>
    <scope>NUCLEOTIDE SEQUENCE [LARGE SCALE GENOMIC DNA]</scope>
</reference>
<comment type="function">
    <text evidence="1 2">Ligand for members of the frizzled family of seven transmembrane receptors. Functions in the canonical Wnt signaling pathway that results in activation of transcription factors of the TCF/LEF family (By similarity). Functions as a upstream regulator of FGF10 expression. Plays an important role in embryonic lung development. May contribute to embryonic brain development by regulating the proliferation of dopaminergic precursors and neurons (By similarity).</text>
</comment>
<comment type="subcellular location">
    <subcellularLocation>
        <location evidence="1">Secreted</location>
        <location evidence="1">Extracellular space</location>
        <location evidence="1">Extracellular matrix</location>
    </subcellularLocation>
    <subcellularLocation>
        <location evidence="1">Secreted</location>
    </subcellularLocation>
</comment>
<comment type="PTM">
    <text evidence="1">Palmitoleoylation is required for efficient binding to frizzled receptors. Depalmitoleoylation leads to Wnt signaling pathway inhibition.</text>
</comment>
<comment type="similarity">
    <text evidence="6">Belongs to the Wnt family.</text>
</comment>
<sequence>MNAPLGGIWLWLPLLLTWLTPEVNSSWWYMRATGGSSRVMCDNVPGLVSSQRQLCHRHPDVMRAISQGVAEWTAECQHQFRQHRWNCNTLDRDHSLFGRVLLRSSRESAFVYAISSAGVVFAITRACSQGEVKSCSCDPKKMGSAKDSKGIFDWGGCSDNIDYGIKFARAFVDAKERKGKDARALMNLHNNRAGRKAVKRFLKQECKCHGVSGSCTLRTCWLAMADFRKTGDYLWRKYNGAIQVVMNQDGTGFTVANERFKKPTKNDLVYFENSPDYCIRDREAGSLGTAGRVCNLTSRGMDSCEVMCCGRGYDTSHVTRMTKCGCKFHWCCAVRCQDCLEALDVHTCKAPKNADWTTPT</sequence>
<organism>
    <name type="scientific">Gorilla gorilla gorilla</name>
    <name type="common">Western lowland gorilla</name>
    <dbReference type="NCBI Taxonomy" id="9595"/>
    <lineage>
        <taxon>Eukaryota</taxon>
        <taxon>Metazoa</taxon>
        <taxon>Chordata</taxon>
        <taxon>Craniata</taxon>
        <taxon>Vertebrata</taxon>
        <taxon>Euteleostomi</taxon>
        <taxon>Mammalia</taxon>
        <taxon>Eutheria</taxon>
        <taxon>Euarchontoglires</taxon>
        <taxon>Primates</taxon>
        <taxon>Haplorrhini</taxon>
        <taxon>Catarrhini</taxon>
        <taxon>Hominidae</taxon>
        <taxon>Gorilla</taxon>
    </lineage>
</organism>
<dbReference type="EMBL" id="DP000025">
    <property type="protein sequence ID" value="ABC87453.1"/>
    <property type="molecule type" value="Genomic_DNA"/>
</dbReference>
<dbReference type="RefSeq" id="XP_004046149.1">
    <property type="nucleotide sequence ID" value="XM_004046101.5"/>
</dbReference>
<dbReference type="SMR" id="Q2IBF4"/>
<dbReference type="FunCoup" id="Q2IBF4">
    <property type="interactions" value="402"/>
</dbReference>
<dbReference type="STRING" id="9593.ENSGGOP00000009495"/>
<dbReference type="GlyCosmos" id="Q2IBF4">
    <property type="glycosylation" value="1 site, No reported glycans"/>
</dbReference>
<dbReference type="Ensembl" id="ENSGGOT00000009760.3">
    <property type="protein sequence ID" value="ENSGGOP00000009495.2"/>
    <property type="gene ID" value="ENSGGOG00000009721.3"/>
</dbReference>
<dbReference type="GeneID" id="101130779"/>
<dbReference type="KEGG" id="ggo:101130779"/>
<dbReference type="CTD" id="7472"/>
<dbReference type="eggNOG" id="KOG3913">
    <property type="taxonomic scope" value="Eukaryota"/>
</dbReference>
<dbReference type="GeneTree" id="ENSGT00940000159231"/>
<dbReference type="HOGENOM" id="CLU_033039_1_4_1"/>
<dbReference type="InParanoid" id="Q2IBF4"/>
<dbReference type="OMA" id="ITRMTKC"/>
<dbReference type="OrthoDB" id="1368at9604"/>
<dbReference type="Proteomes" id="UP000001519">
    <property type="component" value="Chromosome 7"/>
</dbReference>
<dbReference type="Bgee" id="ENSGGOG00000009721">
    <property type="expression patterns" value="Expressed in liver and 2 other cell types or tissues"/>
</dbReference>
<dbReference type="GO" id="GO:0005737">
    <property type="term" value="C:cytoplasm"/>
    <property type="evidence" value="ECO:0007669"/>
    <property type="project" value="Ensembl"/>
</dbReference>
<dbReference type="GO" id="GO:0005615">
    <property type="term" value="C:extracellular space"/>
    <property type="evidence" value="ECO:0000318"/>
    <property type="project" value="GO_Central"/>
</dbReference>
<dbReference type="GO" id="GO:0005125">
    <property type="term" value="F:cytokine activity"/>
    <property type="evidence" value="ECO:0000318"/>
    <property type="project" value="GO_Central"/>
</dbReference>
<dbReference type="GO" id="GO:0005109">
    <property type="term" value="F:frizzled binding"/>
    <property type="evidence" value="ECO:0000318"/>
    <property type="project" value="GO_Central"/>
</dbReference>
<dbReference type="GO" id="GO:0055009">
    <property type="term" value="P:atrial cardiac muscle tissue morphogenesis"/>
    <property type="evidence" value="ECO:0007669"/>
    <property type="project" value="Ensembl"/>
</dbReference>
<dbReference type="GO" id="GO:0060070">
    <property type="term" value="P:canonical Wnt signaling pathway"/>
    <property type="evidence" value="ECO:0000318"/>
    <property type="project" value="GO_Central"/>
</dbReference>
<dbReference type="GO" id="GO:0060317">
    <property type="term" value="P:cardiac epithelial to mesenchymal transition"/>
    <property type="evidence" value="ECO:0007669"/>
    <property type="project" value="Ensembl"/>
</dbReference>
<dbReference type="GO" id="GO:0060038">
    <property type="term" value="P:cardiac muscle cell proliferation"/>
    <property type="evidence" value="ECO:0007669"/>
    <property type="project" value="Ensembl"/>
</dbReference>
<dbReference type="GO" id="GO:0045165">
    <property type="term" value="P:cell fate commitment"/>
    <property type="evidence" value="ECO:0000318"/>
    <property type="project" value="GO_Central"/>
</dbReference>
<dbReference type="GO" id="GO:0033278">
    <property type="term" value="P:cell proliferation in midbrain"/>
    <property type="evidence" value="ECO:0007669"/>
    <property type="project" value="Ensembl"/>
</dbReference>
<dbReference type="GO" id="GO:0007267">
    <property type="term" value="P:cell-cell signaling"/>
    <property type="evidence" value="ECO:0007669"/>
    <property type="project" value="Ensembl"/>
</dbReference>
<dbReference type="GO" id="GO:0071560">
    <property type="term" value="P:cellular response to transforming growth factor beta stimulus"/>
    <property type="evidence" value="ECO:0007669"/>
    <property type="project" value="Ensembl"/>
</dbReference>
<dbReference type="GO" id="GO:0060502">
    <property type="term" value="P:epithelial cell proliferation involved in lung morphogenesis"/>
    <property type="evidence" value="ECO:0007669"/>
    <property type="project" value="Ensembl"/>
</dbReference>
<dbReference type="GO" id="GO:0060716">
    <property type="term" value="P:labyrinthine layer blood vessel development"/>
    <property type="evidence" value="ECO:0007669"/>
    <property type="project" value="Ensembl"/>
</dbReference>
<dbReference type="GO" id="GO:0060492">
    <property type="term" value="P:lung induction"/>
    <property type="evidence" value="ECO:0007669"/>
    <property type="project" value="Ensembl"/>
</dbReference>
<dbReference type="GO" id="GO:0061180">
    <property type="term" value="P:mammary gland epithelium development"/>
    <property type="evidence" value="ECO:0007669"/>
    <property type="project" value="Ensembl"/>
</dbReference>
<dbReference type="GO" id="GO:0010463">
    <property type="term" value="P:mesenchymal cell proliferation"/>
    <property type="evidence" value="ECO:0007669"/>
    <property type="project" value="Ensembl"/>
</dbReference>
<dbReference type="GO" id="GO:1904948">
    <property type="term" value="P:midbrain dopaminergic neuron differentiation"/>
    <property type="evidence" value="ECO:0007669"/>
    <property type="project" value="Ensembl"/>
</dbReference>
<dbReference type="GO" id="GO:0030182">
    <property type="term" value="P:neuron differentiation"/>
    <property type="evidence" value="ECO:0000318"/>
    <property type="project" value="GO_Central"/>
</dbReference>
<dbReference type="GO" id="GO:0060045">
    <property type="term" value="P:positive regulation of cardiac muscle cell proliferation"/>
    <property type="evidence" value="ECO:0007669"/>
    <property type="project" value="Ensembl"/>
</dbReference>
<dbReference type="GO" id="GO:0060501">
    <property type="term" value="P:positive regulation of epithelial cell proliferation involved in lung morphogenesis"/>
    <property type="evidence" value="ECO:0007669"/>
    <property type="project" value="Ensembl"/>
</dbReference>
<dbReference type="GO" id="GO:0048146">
    <property type="term" value="P:positive regulation of fibroblast proliferation"/>
    <property type="evidence" value="ECO:0007669"/>
    <property type="project" value="Ensembl"/>
</dbReference>
<dbReference type="GO" id="GO:0002053">
    <property type="term" value="P:positive regulation of mesenchymal cell proliferation"/>
    <property type="evidence" value="ECO:0007669"/>
    <property type="project" value="Ensembl"/>
</dbReference>
<dbReference type="GO" id="GO:0050769">
    <property type="term" value="P:positive regulation of neurogenesis"/>
    <property type="evidence" value="ECO:0007669"/>
    <property type="project" value="Ensembl"/>
</dbReference>
<dbReference type="GO" id="GO:0045944">
    <property type="term" value="P:positive regulation of transcription by RNA polymerase II"/>
    <property type="evidence" value="ECO:0007669"/>
    <property type="project" value="Ensembl"/>
</dbReference>
<dbReference type="CDD" id="cd19345">
    <property type="entry name" value="Wnt_Wnt2"/>
    <property type="match status" value="1"/>
</dbReference>
<dbReference type="FunFam" id="3.30.2460.20:FF:000001">
    <property type="entry name" value="Wnt homolog"/>
    <property type="match status" value="1"/>
</dbReference>
<dbReference type="Gene3D" id="3.30.2460.20">
    <property type="match status" value="1"/>
</dbReference>
<dbReference type="InterPro" id="IPR005817">
    <property type="entry name" value="Wnt"/>
</dbReference>
<dbReference type="InterPro" id="IPR009140">
    <property type="entry name" value="Wnt2"/>
</dbReference>
<dbReference type="InterPro" id="IPR043158">
    <property type="entry name" value="Wnt_C"/>
</dbReference>
<dbReference type="InterPro" id="IPR018161">
    <property type="entry name" value="Wnt_CS"/>
</dbReference>
<dbReference type="PANTHER" id="PTHR12027:SF86">
    <property type="entry name" value="PROTEIN WNT-2"/>
    <property type="match status" value="1"/>
</dbReference>
<dbReference type="PANTHER" id="PTHR12027">
    <property type="entry name" value="WNT RELATED"/>
    <property type="match status" value="1"/>
</dbReference>
<dbReference type="Pfam" id="PF00110">
    <property type="entry name" value="wnt"/>
    <property type="match status" value="1"/>
</dbReference>
<dbReference type="PRINTS" id="PR01842">
    <property type="entry name" value="WNT2PROTEIN"/>
</dbReference>
<dbReference type="PRINTS" id="PR01349">
    <property type="entry name" value="WNTPROTEIN"/>
</dbReference>
<dbReference type="SMART" id="SM00097">
    <property type="entry name" value="WNT1"/>
    <property type="match status" value="1"/>
</dbReference>
<dbReference type="PROSITE" id="PS00246">
    <property type="entry name" value="WNT1"/>
    <property type="match status" value="1"/>
</dbReference>
<name>WNT2_GORGO</name>
<evidence type="ECO:0000250" key="1">
    <source>
        <dbReference type="UniProtKB" id="P09544"/>
    </source>
</evidence>
<evidence type="ECO:0000250" key="2">
    <source>
        <dbReference type="UniProtKB" id="P21552"/>
    </source>
</evidence>
<evidence type="ECO:0000250" key="3">
    <source>
        <dbReference type="UniProtKB" id="P28026"/>
    </source>
</evidence>
<evidence type="ECO:0000250" key="4">
    <source>
        <dbReference type="UniProtKB" id="P56704"/>
    </source>
</evidence>
<evidence type="ECO:0000255" key="5"/>
<evidence type="ECO:0000305" key="6"/>
<accession>Q2IBF4</accession>
<protein>
    <recommendedName>
        <fullName>Protein Wnt-2</fullName>
    </recommendedName>
</protein>
<feature type="signal peptide" evidence="5">
    <location>
        <begin position="1"/>
        <end position="25"/>
    </location>
</feature>
<feature type="chain" id="PRO_0000235203" description="Protein Wnt-2">
    <location>
        <begin position="26"/>
        <end position="360"/>
    </location>
</feature>
<feature type="lipid moiety-binding region" description="O-palmitoleoyl serine; by PORCN" evidence="4">
    <location>
        <position position="212"/>
    </location>
</feature>
<feature type="glycosylation site" description="N-linked (GlcNAc...) asparagine" evidence="5">
    <location>
        <position position="295"/>
    </location>
</feature>
<feature type="disulfide bond" evidence="3">
    <location>
        <begin position="76"/>
        <end position="87"/>
    </location>
</feature>
<feature type="disulfide bond" evidence="3">
    <location>
        <begin position="127"/>
        <end position="135"/>
    </location>
</feature>
<feature type="disulfide bond" evidence="3">
    <location>
        <begin position="137"/>
        <end position="157"/>
    </location>
</feature>
<feature type="disulfide bond" evidence="3">
    <location>
        <begin position="206"/>
        <end position="220"/>
    </location>
</feature>
<feature type="disulfide bond" evidence="3">
    <location>
        <begin position="208"/>
        <end position="215"/>
    </location>
</feature>
<feature type="disulfide bond" evidence="3">
    <location>
        <begin position="278"/>
        <end position="309"/>
    </location>
</feature>
<feature type="disulfide bond" evidence="3">
    <location>
        <begin position="294"/>
        <end position="304"/>
    </location>
</feature>
<feature type="disulfide bond" evidence="3">
    <location>
        <begin position="308"/>
        <end position="348"/>
    </location>
</feature>
<feature type="disulfide bond" evidence="3">
    <location>
        <begin position="324"/>
        <end position="339"/>
    </location>
</feature>
<feature type="disulfide bond" evidence="3">
    <location>
        <begin position="326"/>
        <end position="336"/>
    </location>
</feature>
<feature type="disulfide bond" evidence="3">
    <location>
        <begin position="331"/>
        <end position="332"/>
    </location>
</feature>
<gene>
    <name type="primary">WNT2</name>
</gene>